<comment type="function">
    <text evidence="1">Mitochondrial DNA endonuclease involved in intron homing.</text>
</comment>
<comment type="subcellular location">
    <subcellularLocation>
        <location>Mitochondrion</location>
    </subcellularLocation>
</comment>
<comment type="miscellaneous">
    <text>Encoded within intron 2 (LRI2) of mitochondrial large subunit ribosomal RNA.</text>
</comment>
<comment type="similarity">
    <text evidence="2">Belongs to the LAGLIDADG endonuclease family.</text>
</comment>
<geneLocation type="mitochondrion"/>
<sequence>MVLNDKVYENISPQTLACWFMDDGGMNGSHSHGLQFRVSVILK</sequence>
<proteinExistence type="inferred from homology"/>
<protein>
    <recommendedName>
        <fullName>Probable intron-encoded DNA endonuclease 2</fullName>
        <ecNumber>3.1.-.-</ecNumber>
    </recommendedName>
</protein>
<evidence type="ECO:0000250" key="1"/>
<evidence type="ECO:0000305" key="2"/>
<name>IEND2_MYCMD</name>
<keyword id="KW-0255">Endonuclease</keyword>
<keyword id="KW-0378">Hydrolase</keyword>
<keyword id="KW-0404">Intron homing</keyword>
<keyword id="KW-0496">Mitochondrion</keyword>
<keyword id="KW-0540">Nuclease</keyword>
<keyword id="KW-1185">Reference proteome</keyword>
<feature type="chain" id="PRO_0000420910" description="Probable intron-encoded DNA endonuclease 2">
    <location>
        <begin position="1"/>
        <end position="43"/>
    </location>
</feature>
<accession>Q0H8Z2</accession>
<reference key="1">
    <citation type="submission" date="2005-08" db="EMBL/GenBank/DDBJ databases">
        <title>Annotation of mitochondrial genome of Ustilago maydis and comparative analysis of basidiomycete mtDNAs.</title>
        <authorList>
            <person name="Kennell J.C."/>
            <person name="Boehmer C."/>
        </authorList>
    </citation>
    <scope>NUCLEOTIDE SEQUENCE [LARGE SCALE GENOMIC DNA]</scope>
    <source>
        <strain>DSM 14603 / FGSC 9021 / UM521</strain>
    </source>
</reference>
<reference key="2">
    <citation type="journal article" date="2006" name="Nature">
        <title>Insights from the genome of the biotrophic fungal plant pathogen Ustilago maydis.</title>
        <authorList>
            <person name="Kaemper J."/>
            <person name="Kahmann R."/>
            <person name="Boelker M."/>
            <person name="Ma L.-J."/>
            <person name="Brefort T."/>
            <person name="Saville B.J."/>
            <person name="Banuett F."/>
            <person name="Kronstad J.W."/>
            <person name="Gold S.E."/>
            <person name="Mueller O."/>
            <person name="Perlin M.H."/>
            <person name="Woesten H.A.B."/>
            <person name="de Vries R."/>
            <person name="Ruiz-Herrera J."/>
            <person name="Reynaga-Pena C.G."/>
            <person name="Snetselaar K."/>
            <person name="McCann M."/>
            <person name="Perez-Martin J."/>
            <person name="Feldbruegge M."/>
            <person name="Basse C.W."/>
            <person name="Steinberg G."/>
            <person name="Ibeas J.I."/>
            <person name="Holloman W."/>
            <person name="Guzman P."/>
            <person name="Farman M.L."/>
            <person name="Stajich J.E."/>
            <person name="Sentandreu R."/>
            <person name="Gonzalez-Prieto J.M."/>
            <person name="Kennell J.C."/>
            <person name="Molina L."/>
            <person name="Schirawski J."/>
            <person name="Mendoza-Mendoza A."/>
            <person name="Greilinger D."/>
            <person name="Muench K."/>
            <person name="Roessel N."/>
            <person name="Scherer M."/>
            <person name="Vranes M."/>
            <person name="Ladendorf O."/>
            <person name="Vincon V."/>
            <person name="Fuchs U."/>
            <person name="Sandrock B."/>
            <person name="Meng S."/>
            <person name="Ho E.C.H."/>
            <person name="Cahill M.J."/>
            <person name="Boyce K.J."/>
            <person name="Klose J."/>
            <person name="Klosterman S.J."/>
            <person name="Deelstra H.J."/>
            <person name="Ortiz-Castellanos L."/>
            <person name="Li W."/>
            <person name="Sanchez-Alonso P."/>
            <person name="Schreier P.H."/>
            <person name="Haeuser-Hahn I."/>
            <person name="Vaupel M."/>
            <person name="Koopmann E."/>
            <person name="Friedrich G."/>
            <person name="Voss H."/>
            <person name="Schlueter T."/>
            <person name="Margolis J."/>
            <person name="Platt D."/>
            <person name="Swimmer C."/>
            <person name="Gnirke A."/>
            <person name="Chen F."/>
            <person name="Vysotskaia V."/>
            <person name="Mannhaupt G."/>
            <person name="Gueldener U."/>
            <person name="Muensterkoetter M."/>
            <person name="Haase D."/>
            <person name="Oesterheld M."/>
            <person name="Mewes H.-W."/>
            <person name="Mauceli E.W."/>
            <person name="DeCaprio D."/>
            <person name="Wade C.M."/>
            <person name="Butler J."/>
            <person name="Young S.K."/>
            <person name="Jaffe D.B."/>
            <person name="Calvo S.E."/>
            <person name="Nusbaum C."/>
            <person name="Galagan J.E."/>
            <person name="Birren B.W."/>
        </authorList>
    </citation>
    <scope>NUCLEOTIDE SEQUENCE [LARGE SCALE GENOMIC DNA]</scope>
    <source>
        <strain>DSM 14603 / FGSC 9021 / UM521</strain>
    </source>
</reference>
<dbReference type="EC" id="3.1.-.-"/>
<dbReference type="EMBL" id="DQ157700">
    <property type="protein sequence ID" value="AAZ67021.1"/>
    <property type="molecule type" value="Genomic_DNA"/>
</dbReference>
<dbReference type="EMBL" id="AACP01000278">
    <property type="status" value="NOT_ANNOTATED_CDS"/>
    <property type="molecule type" value="Genomic_DNA"/>
</dbReference>
<dbReference type="RefSeq" id="YP_762680.1">
    <property type="nucleotide sequence ID" value="NC_008368.1"/>
</dbReference>
<dbReference type="GeneID" id="4308286"/>
<dbReference type="InParanoid" id="Q0H8Z2"/>
<dbReference type="Proteomes" id="UP000000561">
    <property type="component" value="Mitochondrion"/>
</dbReference>
<dbReference type="GO" id="GO:0005739">
    <property type="term" value="C:mitochondrion"/>
    <property type="evidence" value="ECO:0007669"/>
    <property type="project" value="UniProtKB-SubCell"/>
</dbReference>
<dbReference type="GO" id="GO:0004519">
    <property type="term" value="F:endonuclease activity"/>
    <property type="evidence" value="ECO:0007669"/>
    <property type="project" value="UniProtKB-KW"/>
</dbReference>
<dbReference type="GO" id="GO:0006314">
    <property type="term" value="P:intron homing"/>
    <property type="evidence" value="ECO:0007669"/>
    <property type="project" value="UniProtKB-KW"/>
</dbReference>
<dbReference type="Gene3D" id="3.10.28.10">
    <property type="entry name" value="Homing endonucleases"/>
    <property type="match status" value="1"/>
</dbReference>
<dbReference type="InterPro" id="IPR027434">
    <property type="entry name" value="Homing_endonucl"/>
</dbReference>
<dbReference type="InterPro" id="IPR004860">
    <property type="entry name" value="LAGLIDADG_dom"/>
</dbReference>
<dbReference type="Pfam" id="PF03161">
    <property type="entry name" value="LAGLIDADG_2"/>
    <property type="match status" value="1"/>
</dbReference>
<dbReference type="SUPFAM" id="SSF55608">
    <property type="entry name" value="Homing endonucleases"/>
    <property type="match status" value="1"/>
</dbReference>
<gene>
    <name type="primary">hegI2</name>
    <name type="synonym">rnl</name>
</gene>
<organism>
    <name type="scientific">Mycosarcoma maydis</name>
    <name type="common">Corn smut fungus</name>
    <name type="synonym">Ustilago maydis</name>
    <dbReference type="NCBI Taxonomy" id="5270"/>
    <lineage>
        <taxon>Eukaryota</taxon>
        <taxon>Fungi</taxon>
        <taxon>Dikarya</taxon>
        <taxon>Basidiomycota</taxon>
        <taxon>Ustilaginomycotina</taxon>
        <taxon>Ustilaginomycetes</taxon>
        <taxon>Ustilaginales</taxon>
        <taxon>Ustilaginaceae</taxon>
        <taxon>Mycosarcoma</taxon>
    </lineage>
</organism>